<feature type="chain" id="PRO_1000056730" description="UPF0225 protein Bpro_4182">
    <location>
        <begin position="1"/>
        <end position="139"/>
    </location>
</feature>
<proteinExistence type="inferred from homology"/>
<keyword id="KW-1185">Reference proteome</keyword>
<comment type="similarity">
    <text evidence="1">Belongs to the UPF0225 family.</text>
</comment>
<dbReference type="EMBL" id="CP000316">
    <property type="protein sequence ID" value="ABE46074.1"/>
    <property type="molecule type" value="Genomic_DNA"/>
</dbReference>
<dbReference type="RefSeq" id="WP_011485063.1">
    <property type="nucleotide sequence ID" value="NC_007948.1"/>
</dbReference>
<dbReference type="SMR" id="Q124G8"/>
<dbReference type="STRING" id="296591.Bpro_4182"/>
<dbReference type="KEGG" id="pol:Bpro_4182"/>
<dbReference type="eggNOG" id="COG3012">
    <property type="taxonomic scope" value="Bacteria"/>
</dbReference>
<dbReference type="HOGENOM" id="CLU_099590_2_0_4"/>
<dbReference type="OrthoDB" id="21421at2"/>
<dbReference type="Proteomes" id="UP000001983">
    <property type="component" value="Chromosome"/>
</dbReference>
<dbReference type="Gene3D" id="3.10.450.50">
    <property type="match status" value="1"/>
</dbReference>
<dbReference type="HAMAP" id="MF_00612">
    <property type="entry name" value="UPF0225"/>
    <property type="match status" value="1"/>
</dbReference>
<dbReference type="InterPro" id="IPR032710">
    <property type="entry name" value="NTF2-like_dom_sf"/>
</dbReference>
<dbReference type="InterPro" id="IPR023006">
    <property type="entry name" value="UPF0225"/>
</dbReference>
<dbReference type="InterPro" id="IPR048469">
    <property type="entry name" value="YchJ-like_M"/>
</dbReference>
<dbReference type="Pfam" id="PF17775">
    <property type="entry name" value="YchJ_M-like"/>
    <property type="match status" value="1"/>
</dbReference>
<dbReference type="SUPFAM" id="SSF54427">
    <property type="entry name" value="NTF2-like"/>
    <property type="match status" value="1"/>
</dbReference>
<evidence type="ECO:0000255" key="1">
    <source>
        <dbReference type="HAMAP-Rule" id="MF_00612"/>
    </source>
</evidence>
<gene>
    <name type="ordered locus">Bpro_4182</name>
</gene>
<organism>
    <name type="scientific">Polaromonas sp. (strain JS666 / ATCC BAA-500)</name>
    <dbReference type="NCBI Taxonomy" id="296591"/>
    <lineage>
        <taxon>Bacteria</taxon>
        <taxon>Pseudomonadati</taxon>
        <taxon>Pseudomonadota</taxon>
        <taxon>Betaproteobacteria</taxon>
        <taxon>Burkholderiales</taxon>
        <taxon>Comamonadaceae</taxon>
        <taxon>Polaromonas</taxon>
    </lineage>
</organism>
<name>Y4182_POLSJ</name>
<protein>
    <recommendedName>
        <fullName evidence="1">UPF0225 protein Bpro_4182</fullName>
    </recommendedName>
</protein>
<accession>Q124G8</accession>
<sequence>MPAALLPGAGCPCGRLGASGKPLAFAQCCGRYLDDFAGTPAPDAESLMRSRYCAFVRERADYLLATWHASQRPPSIDFDPGVKWLGLEVRQHRQLDATHAEVEFVARQKSPGSPAVRLHERSRFVHEAGRWYYVDGDTR</sequence>
<reference key="1">
    <citation type="journal article" date="2008" name="Appl. Environ. Microbiol.">
        <title>The genome of Polaromonas sp. strain JS666: insights into the evolution of a hydrocarbon- and xenobiotic-degrading bacterium, and features of relevance to biotechnology.</title>
        <authorList>
            <person name="Mattes T.E."/>
            <person name="Alexander A.K."/>
            <person name="Richardson P.M."/>
            <person name="Munk A.C."/>
            <person name="Han C.S."/>
            <person name="Stothard P."/>
            <person name="Coleman N.V."/>
        </authorList>
    </citation>
    <scope>NUCLEOTIDE SEQUENCE [LARGE SCALE GENOMIC DNA]</scope>
    <source>
        <strain>JS666 / ATCC BAA-500</strain>
    </source>
</reference>